<sequence length="171" mass="19515">MGKASANNVKSDKEAAKPAAKKDENKDFQYIVRIANKDLNGERPIPLALSDLKGIGLRLGYAIAERLNLQPTKKIGELKEDEIEKLKEYVENKEYDLPDWLLNHRREPVTGKNLNLVTTDLDVQVQEDINLMKKIRSYKGIRHEKGKKVRGQRTRSNGRRGLSIGVVRKKE</sequence>
<accession>Q97B96</accession>
<reference key="1">
    <citation type="journal article" date="2000" name="Proc. Natl. Acad. Sci. U.S.A.">
        <title>Archaeal adaptation to higher temperatures revealed by genomic sequence of Thermoplasma volcanium.</title>
        <authorList>
            <person name="Kawashima T."/>
            <person name="Amano N."/>
            <person name="Koike H."/>
            <person name="Makino S."/>
            <person name="Higuchi S."/>
            <person name="Kawashima-Ohya Y."/>
            <person name="Watanabe K."/>
            <person name="Yamazaki M."/>
            <person name="Kanehori K."/>
            <person name="Kawamoto T."/>
            <person name="Nunoshiba T."/>
            <person name="Yamamoto Y."/>
            <person name="Aramaki H."/>
            <person name="Makino K."/>
            <person name="Suzuki M."/>
        </authorList>
    </citation>
    <scope>NUCLEOTIDE SEQUENCE [LARGE SCALE GENOMIC DNA]</scope>
    <source>
        <strain>ATCC 51530 / DSM 4299 / JCM 9571 / NBRC 15438 / GSS1</strain>
    </source>
</reference>
<proteinExistence type="inferred from homology"/>
<feature type="chain" id="PRO_0000132194" description="Small ribosomal subunit protein uS13">
    <location>
        <begin position="1"/>
        <end position="171"/>
    </location>
</feature>
<feature type="region of interest" description="Disordered" evidence="2">
    <location>
        <begin position="1"/>
        <end position="22"/>
    </location>
</feature>
<feature type="region of interest" description="Disordered" evidence="2">
    <location>
        <begin position="142"/>
        <end position="171"/>
    </location>
</feature>
<feature type="compositionally biased region" description="Basic and acidic residues" evidence="2">
    <location>
        <begin position="10"/>
        <end position="22"/>
    </location>
</feature>
<feature type="compositionally biased region" description="Basic residues" evidence="2">
    <location>
        <begin position="142"/>
        <end position="158"/>
    </location>
</feature>
<protein>
    <recommendedName>
        <fullName evidence="1">Small ribosomal subunit protein uS13</fullName>
    </recommendedName>
    <alternativeName>
        <fullName evidence="3">30S ribosomal protein S13</fullName>
    </alternativeName>
</protein>
<organism>
    <name type="scientific">Thermoplasma volcanium (strain ATCC 51530 / DSM 4299 / JCM 9571 / NBRC 15438 / GSS1)</name>
    <dbReference type="NCBI Taxonomy" id="273116"/>
    <lineage>
        <taxon>Archaea</taxon>
        <taxon>Methanobacteriati</taxon>
        <taxon>Thermoplasmatota</taxon>
        <taxon>Thermoplasmata</taxon>
        <taxon>Thermoplasmatales</taxon>
        <taxon>Thermoplasmataceae</taxon>
        <taxon>Thermoplasma</taxon>
    </lineage>
</organism>
<evidence type="ECO:0000255" key="1">
    <source>
        <dbReference type="HAMAP-Rule" id="MF_01315"/>
    </source>
</evidence>
<evidence type="ECO:0000256" key="2">
    <source>
        <dbReference type="SAM" id="MobiDB-lite"/>
    </source>
</evidence>
<evidence type="ECO:0000305" key="3"/>
<keyword id="KW-0687">Ribonucleoprotein</keyword>
<keyword id="KW-0689">Ribosomal protein</keyword>
<keyword id="KW-0694">RNA-binding</keyword>
<keyword id="KW-0699">rRNA-binding</keyword>
<name>RS13_THEVO</name>
<comment type="function">
    <text evidence="1">Located at the top of the head of the 30S subunit, it contacts several helices of the 16S rRNA. In the 70S ribosome it contacts the 23S rRNA (bridge B1a) and protein L5 of the 50S subunit (bridge B1b), connecting the 2 subunits; these bridges are implicated in subunit movement.</text>
</comment>
<comment type="subunit">
    <text evidence="1">Part of the 30S ribosomal subunit. Forms a loose heterodimer with protein S19. Forms two bridges to the 50S subunit in the 70S ribosome.</text>
</comment>
<comment type="similarity">
    <text evidence="1">Belongs to the universal ribosomal protein uS13 family.</text>
</comment>
<dbReference type="EMBL" id="BA000011">
    <property type="protein sequence ID" value="BAB59703.1"/>
    <property type="molecule type" value="Genomic_DNA"/>
</dbReference>
<dbReference type="RefSeq" id="WP_010916820.1">
    <property type="nucleotide sequence ID" value="NC_002689.2"/>
</dbReference>
<dbReference type="SMR" id="Q97B96"/>
<dbReference type="STRING" id="273116.gene:9381346"/>
<dbReference type="PaxDb" id="273116-14324776"/>
<dbReference type="GeneID" id="1441078"/>
<dbReference type="KEGG" id="tvo:TVG0550096"/>
<dbReference type="eggNOG" id="arCOG01722">
    <property type="taxonomic scope" value="Archaea"/>
</dbReference>
<dbReference type="HOGENOM" id="CLU_103849_0_0_2"/>
<dbReference type="OrthoDB" id="372127at2157"/>
<dbReference type="PhylomeDB" id="Q97B96"/>
<dbReference type="Proteomes" id="UP000001017">
    <property type="component" value="Chromosome"/>
</dbReference>
<dbReference type="GO" id="GO:0005829">
    <property type="term" value="C:cytosol"/>
    <property type="evidence" value="ECO:0007669"/>
    <property type="project" value="TreeGrafter"/>
</dbReference>
<dbReference type="GO" id="GO:0015935">
    <property type="term" value="C:small ribosomal subunit"/>
    <property type="evidence" value="ECO:0007669"/>
    <property type="project" value="TreeGrafter"/>
</dbReference>
<dbReference type="GO" id="GO:0019843">
    <property type="term" value="F:rRNA binding"/>
    <property type="evidence" value="ECO:0007669"/>
    <property type="project" value="UniProtKB-UniRule"/>
</dbReference>
<dbReference type="GO" id="GO:0003735">
    <property type="term" value="F:structural constituent of ribosome"/>
    <property type="evidence" value="ECO:0007669"/>
    <property type="project" value="InterPro"/>
</dbReference>
<dbReference type="GO" id="GO:0006412">
    <property type="term" value="P:translation"/>
    <property type="evidence" value="ECO:0007669"/>
    <property type="project" value="UniProtKB-UniRule"/>
</dbReference>
<dbReference type="Gene3D" id="1.10.8.50">
    <property type="match status" value="1"/>
</dbReference>
<dbReference type="Gene3D" id="4.10.910.10">
    <property type="entry name" value="30s ribosomal protein s13, domain 2"/>
    <property type="match status" value="1"/>
</dbReference>
<dbReference type="HAMAP" id="MF_01315">
    <property type="entry name" value="Ribosomal_uS13"/>
    <property type="match status" value="1"/>
</dbReference>
<dbReference type="InterPro" id="IPR027437">
    <property type="entry name" value="Rbsml_uS13_C"/>
</dbReference>
<dbReference type="InterPro" id="IPR001892">
    <property type="entry name" value="Ribosomal_uS13"/>
</dbReference>
<dbReference type="InterPro" id="IPR010979">
    <property type="entry name" value="Ribosomal_uS13-like_H2TH"/>
</dbReference>
<dbReference type="InterPro" id="IPR019977">
    <property type="entry name" value="Ribosomal_uS13_archaeal"/>
</dbReference>
<dbReference type="InterPro" id="IPR018269">
    <property type="entry name" value="Ribosomal_uS13_CS"/>
</dbReference>
<dbReference type="NCBIfam" id="NF003140">
    <property type="entry name" value="PRK04053.1"/>
    <property type="match status" value="1"/>
</dbReference>
<dbReference type="NCBIfam" id="TIGR03629">
    <property type="entry name" value="uS13_arch"/>
    <property type="match status" value="1"/>
</dbReference>
<dbReference type="PANTHER" id="PTHR10871">
    <property type="entry name" value="30S RIBOSOMAL PROTEIN S13/40S RIBOSOMAL PROTEIN S18"/>
    <property type="match status" value="1"/>
</dbReference>
<dbReference type="PANTHER" id="PTHR10871:SF3">
    <property type="entry name" value="SMALL RIBOSOMAL SUBUNIT PROTEIN US13"/>
    <property type="match status" value="1"/>
</dbReference>
<dbReference type="Pfam" id="PF00416">
    <property type="entry name" value="Ribosomal_S13"/>
    <property type="match status" value="1"/>
</dbReference>
<dbReference type="PIRSF" id="PIRSF002134">
    <property type="entry name" value="Ribosomal_S13"/>
    <property type="match status" value="1"/>
</dbReference>
<dbReference type="SUPFAM" id="SSF46946">
    <property type="entry name" value="S13-like H2TH domain"/>
    <property type="match status" value="1"/>
</dbReference>
<dbReference type="PROSITE" id="PS00646">
    <property type="entry name" value="RIBOSOMAL_S13_1"/>
    <property type="match status" value="1"/>
</dbReference>
<dbReference type="PROSITE" id="PS50159">
    <property type="entry name" value="RIBOSOMAL_S13_2"/>
    <property type="match status" value="1"/>
</dbReference>
<gene>
    <name evidence="1" type="primary">rps13</name>
    <name type="ordered locus">TV0561</name>
    <name type="ORF">TVG0550096</name>
</gene>